<gene>
    <name evidence="1" type="primary">nfi</name>
    <name type="ordered locus">Avin_13030</name>
</gene>
<protein>
    <recommendedName>
        <fullName evidence="1">Endonuclease V</fullName>
        <ecNumber evidence="1">3.1.21.7</ecNumber>
    </recommendedName>
    <alternativeName>
        <fullName evidence="1">Deoxyinosine 3'endonuclease</fullName>
    </alternativeName>
    <alternativeName>
        <fullName evidence="1">Deoxyribonuclease V</fullName>
        <shortName evidence="1">DNase V</shortName>
    </alternativeName>
</protein>
<sequence>MPDSPFGDWDGTPAGARLLQQELAGRVVLRDDFPDLGLIAGVDVGFEEGGGITRAAAVLLDANTLGVLAESLVRIPTSMPYIPGLLSFRELPAVLRALAELPRVPDLVFCDGQGIAHPRRLGIAAHLGVVSGLPTIGVAKKILVGTHAELGSHRGDQVPLMYRGEVLGAVLRSKDRVRPLIVSPGHRVSLASAPRLVMACVTRYRLPEPTRLADRLASRRA</sequence>
<organism>
    <name type="scientific">Azotobacter vinelandii (strain DJ / ATCC BAA-1303)</name>
    <dbReference type="NCBI Taxonomy" id="322710"/>
    <lineage>
        <taxon>Bacteria</taxon>
        <taxon>Pseudomonadati</taxon>
        <taxon>Pseudomonadota</taxon>
        <taxon>Gammaproteobacteria</taxon>
        <taxon>Pseudomonadales</taxon>
        <taxon>Pseudomonadaceae</taxon>
        <taxon>Azotobacter</taxon>
    </lineage>
</organism>
<evidence type="ECO:0000255" key="1">
    <source>
        <dbReference type="HAMAP-Rule" id="MF_00801"/>
    </source>
</evidence>
<comment type="function">
    <text evidence="1">DNA repair enzyme involved in the repair of deaminated bases. Selectively cleaves double-stranded DNA at the second phosphodiester bond 3' to a deoxyinosine leaving behind the intact lesion on the nicked DNA.</text>
</comment>
<comment type="catalytic activity">
    <reaction evidence="1">
        <text>Endonucleolytic cleavage at apurinic or apyrimidinic sites to products with a 5'-phosphate.</text>
        <dbReference type="EC" id="3.1.21.7"/>
    </reaction>
</comment>
<comment type="cofactor">
    <cofactor evidence="1">
        <name>Mg(2+)</name>
        <dbReference type="ChEBI" id="CHEBI:18420"/>
    </cofactor>
</comment>
<comment type="subcellular location">
    <subcellularLocation>
        <location evidence="1">Cytoplasm</location>
    </subcellularLocation>
</comment>
<comment type="similarity">
    <text evidence="1">Belongs to the endonuclease V family.</text>
</comment>
<dbReference type="EC" id="3.1.21.7" evidence="1"/>
<dbReference type="EMBL" id="CP001157">
    <property type="protein sequence ID" value="ACO77529.1"/>
    <property type="molecule type" value="Genomic_DNA"/>
</dbReference>
<dbReference type="RefSeq" id="WP_012699949.1">
    <property type="nucleotide sequence ID" value="NC_012560.1"/>
</dbReference>
<dbReference type="SMR" id="C1DQ77"/>
<dbReference type="STRING" id="322710.Avin_13030"/>
<dbReference type="EnsemblBacteria" id="ACO77529">
    <property type="protein sequence ID" value="ACO77529"/>
    <property type="gene ID" value="Avin_13030"/>
</dbReference>
<dbReference type="GeneID" id="88184619"/>
<dbReference type="KEGG" id="avn:Avin_13030"/>
<dbReference type="eggNOG" id="COG1515">
    <property type="taxonomic scope" value="Bacteria"/>
</dbReference>
<dbReference type="HOGENOM" id="CLU_047631_1_1_6"/>
<dbReference type="Proteomes" id="UP000002424">
    <property type="component" value="Chromosome"/>
</dbReference>
<dbReference type="GO" id="GO:0005737">
    <property type="term" value="C:cytoplasm"/>
    <property type="evidence" value="ECO:0007669"/>
    <property type="project" value="UniProtKB-SubCell"/>
</dbReference>
<dbReference type="GO" id="GO:0043737">
    <property type="term" value="F:deoxyribonuclease V activity"/>
    <property type="evidence" value="ECO:0007669"/>
    <property type="project" value="UniProtKB-UniRule"/>
</dbReference>
<dbReference type="GO" id="GO:0000287">
    <property type="term" value="F:magnesium ion binding"/>
    <property type="evidence" value="ECO:0007669"/>
    <property type="project" value="UniProtKB-UniRule"/>
</dbReference>
<dbReference type="GO" id="GO:0016891">
    <property type="term" value="F:RNA endonuclease activity, producing 5'-phosphomonoesters"/>
    <property type="evidence" value="ECO:0007669"/>
    <property type="project" value="TreeGrafter"/>
</dbReference>
<dbReference type="GO" id="GO:0003727">
    <property type="term" value="F:single-stranded RNA binding"/>
    <property type="evidence" value="ECO:0007669"/>
    <property type="project" value="TreeGrafter"/>
</dbReference>
<dbReference type="GO" id="GO:0006281">
    <property type="term" value="P:DNA repair"/>
    <property type="evidence" value="ECO:0007669"/>
    <property type="project" value="UniProtKB-UniRule"/>
</dbReference>
<dbReference type="CDD" id="cd06559">
    <property type="entry name" value="Endonuclease_V"/>
    <property type="match status" value="1"/>
</dbReference>
<dbReference type="Gene3D" id="3.30.2170.10">
    <property type="entry name" value="archaeoglobus fulgidus dsm 4304 superfamily"/>
    <property type="match status" value="1"/>
</dbReference>
<dbReference type="HAMAP" id="MF_00801">
    <property type="entry name" value="Endonuclease_5"/>
    <property type="match status" value="1"/>
</dbReference>
<dbReference type="InterPro" id="IPR007581">
    <property type="entry name" value="Endonuclease-V"/>
</dbReference>
<dbReference type="NCBIfam" id="NF008629">
    <property type="entry name" value="PRK11617.1"/>
    <property type="match status" value="1"/>
</dbReference>
<dbReference type="PANTHER" id="PTHR28511">
    <property type="entry name" value="ENDONUCLEASE V"/>
    <property type="match status" value="1"/>
</dbReference>
<dbReference type="PANTHER" id="PTHR28511:SF1">
    <property type="entry name" value="ENDONUCLEASE V"/>
    <property type="match status" value="1"/>
</dbReference>
<dbReference type="Pfam" id="PF04493">
    <property type="entry name" value="Endonuclease_5"/>
    <property type="match status" value="1"/>
</dbReference>
<feature type="chain" id="PRO_1000212970" description="Endonuclease V">
    <location>
        <begin position="1"/>
        <end position="221"/>
    </location>
</feature>
<feature type="binding site" evidence="1">
    <location>
        <position position="43"/>
    </location>
    <ligand>
        <name>Mg(2+)</name>
        <dbReference type="ChEBI" id="CHEBI:18420"/>
    </ligand>
</feature>
<feature type="binding site" evidence="1">
    <location>
        <position position="111"/>
    </location>
    <ligand>
        <name>Mg(2+)</name>
        <dbReference type="ChEBI" id="CHEBI:18420"/>
    </ligand>
</feature>
<feature type="site" description="Interaction with target DNA" evidence="1">
    <location>
        <position position="81"/>
    </location>
</feature>
<name>NFI_AZOVD</name>
<keyword id="KW-0963">Cytoplasm</keyword>
<keyword id="KW-0227">DNA damage</keyword>
<keyword id="KW-0234">DNA repair</keyword>
<keyword id="KW-0255">Endonuclease</keyword>
<keyword id="KW-0378">Hydrolase</keyword>
<keyword id="KW-0460">Magnesium</keyword>
<keyword id="KW-0479">Metal-binding</keyword>
<keyword id="KW-0540">Nuclease</keyword>
<proteinExistence type="inferred from homology"/>
<accession>C1DQ77</accession>
<reference key="1">
    <citation type="journal article" date="2009" name="J. Bacteriol.">
        <title>Genome sequence of Azotobacter vinelandii, an obligate aerobe specialized to support diverse anaerobic metabolic processes.</title>
        <authorList>
            <person name="Setubal J.C."/>
            <person name="Dos Santos P."/>
            <person name="Goldman B.S."/>
            <person name="Ertesvaag H."/>
            <person name="Espin G."/>
            <person name="Rubio L.M."/>
            <person name="Valla S."/>
            <person name="Almeida N.F."/>
            <person name="Balasubramanian D."/>
            <person name="Cromes L."/>
            <person name="Curatti L."/>
            <person name="Du Z."/>
            <person name="Godsy E."/>
            <person name="Goodner B."/>
            <person name="Hellner-Burris K."/>
            <person name="Hernandez J.A."/>
            <person name="Houmiel K."/>
            <person name="Imperial J."/>
            <person name="Kennedy C."/>
            <person name="Larson T.J."/>
            <person name="Latreille P."/>
            <person name="Ligon L.S."/>
            <person name="Lu J."/>
            <person name="Maerk M."/>
            <person name="Miller N.M."/>
            <person name="Norton S."/>
            <person name="O'Carroll I.P."/>
            <person name="Paulsen I."/>
            <person name="Raulfs E.C."/>
            <person name="Roemer R."/>
            <person name="Rosser J."/>
            <person name="Segura D."/>
            <person name="Slater S."/>
            <person name="Stricklin S.L."/>
            <person name="Studholme D.J."/>
            <person name="Sun J."/>
            <person name="Viana C.J."/>
            <person name="Wallin E."/>
            <person name="Wang B."/>
            <person name="Wheeler C."/>
            <person name="Zhu H."/>
            <person name="Dean D.R."/>
            <person name="Dixon R."/>
            <person name="Wood D."/>
        </authorList>
    </citation>
    <scope>NUCLEOTIDE SEQUENCE [LARGE SCALE GENOMIC DNA]</scope>
    <source>
        <strain>DJ / ATCC BAA-1303</strain>
    </source>
</reference>